<sequence>MYLKSLKIYNFRKFGTNNNKIEFVDAKSFQEQRNKKEVNIAPTTTLIVGKNNCGKTTIIKSLDNLINNNKDAFKANDFNFLYLKKLIEYYEQAIPKLDDELKEKIKTPYLQFNICIGIENNSNDLVTNIVRFMKLDDINNSELKIVIKVELENEEVFIRDVKKLLEKNDNSSLRFNSFLELINDSDFKINYYNTDNDKIDNFNIKNLIELRPIKANNIESEKCLSKAFSKIIEYRYKTLFEEESDNLNSTIININRTLTKLISEKHTVSINKSLEEIESNEKLQVLLRADLTFQNVMNNLIKYEYVERNMNIPENQFGLGYTNLMMIIADLIDYMEKYPENSFNSKVNLISIEEPETFMHPQMQELFIKNINEAIASLLKSKNKNVNSQLIITTHSSHILNSKIHSGNTFNNINYVTTKNNYTHVVNLHDDIIIPKSEKKAHKREQDLKFLKKHIKYKVSELFFSDAIIFVEGVTEETLLKYYIDDNNKLNKYYISVFNIDGAHGMVYHNLIEILQVPALIITDLDIERDDDEKKNFKQISDLTGKFTTNKTIKKYNDDSNSLEELQHEQLKINNMYIAYQGKIEEYYATSFEEAFILTNYKNELLNSVLKKMKPQIYENIMGEGDDFTKIKENSYKLQKKLSNDKSDFANELLYKFITEDITIPSLPKYIKSGLSWLAKKLEGEE</sequence>
<dbReference type="EC" id="3.1.-.-" evidence="2"/>
<dbReference type="EMBL" id="JH792120">
    <property type="protein sequence ID" value="EJQ91274.1"/>
    <property type="molecule type" value="Genomic_DNA"/>
</dbReference>
<dbReference type="GO" id="GO:0004519">
    <property type="term" value="F:endonuclease activity"/>
    <property type="evidence" value="ECO:0007669"/>
    <property type="project" value="UniProtKB-KW"/>
</dbReference>
<dbReference type="GO" id="GO:0046872">
    <property type="term" value="F:metal ion binding"/>
    <property type="evidence" value="ECO:0007669"/>
    <property type="project" value="UniProtKB-KW"/>
</dbReference>
<dbReference type="GO" id="GO:0051607">
    <property type="term" value="P:defense response to virus"/>
    <property type="evidence" value="ECO:0007669"/>
    <property type="project" value="UniProtKB-KW"/>
</dbReference>
<dbReference type="CDD" id="cd01026">
    <property type="entry name" value="TOPRIM_OLD"/>
    <property type="match status" value="1"/>
</dbReference>
<dbReference type="Gene3D" id="3.40.50.300">
    <property type="entry name" value="P-loop containing nucleotide triphosphate hydrolases"/>
    <property type="match status" value="1"/>
</dbReference>
<dbReference type="InterPro" id="IPR041685">
    <property type="entry name" value="AAA_GajA/Old/RecF-like"/>
</dbReference>
<dbReference type="InterPro" id="IPR051396">
    <property type="entry name" value="Bact_Antivir_Def_Nuclease"/>
</dbReference>
<dbReference type="InterPro" id="IPR027417">
    <property type="entry name" value="P-loop_NTPase"/>
</dbReference>
<dbReference type="InterPro" id="IPR034139">
    <property type="entry name" value="TOPRIM_OLD"/>
</dbReference>
<dbReference type="PANTHER" id="PTHR43581">
    <property type="entry name" value="ATP/GTP PHOSPHATASE"/>
    <property type="match status" value="1"/>
</dbReference>
<dbReference type="PANTHER" id="PTHR43581:SF4">
    <property type="entry name" value="ATP_GTP PHOSPHATASE"/>
    <property type="match status" value="1"/>
</dbReference>
<dbReference type="Pfam" id="PF13175">
    <property type="entry name" value="AAA_15"/>
    <property type="match status" value="1"/>
</dbReference>
<dbReference type="Pfam" id="PF20469">
    <property type="entry name" value="OLD-like_TOPRIM"/>
    <property type="match status" value="1"/>
</dbReference>
<dbReference type="SUPFAM" id="SSF52540">
    <property type="entry name" value="P-loop containing nucleoside triphosphate hydrolases"/>
    <property type="match status" value="1"/>
</dbReference>
<name>GAJA_BACC5</name>
<proteinExistence type="inferred from homology"/>
<feature type="chain" id="PRO_0000456379" description="Endonuclease GajA">
    <location>
        <begin position="1"/>
        <end position="686"/>
    </location>
</feature>
<feature type="region of interest" description="ATPase domain" evidence="2">
    <location>
        <begin position="1"/>
        <end position="423"/>
    </location>
</feature>
<feature type="region of interest" description="Toprim domain" evidence="2">
    <location>
        <begin position="463"/>
        <end position="599"/>
    </location>
</feature>
<feature type="binding site" evidence="1">
    <location>
        <begin position="52"/>
        <end position="56"/>
    </location>
    <ligand>
        <name>ATP</name>
        <dbReference type="ChEBI" id="CHEBI:30616"/>
    </ligand>
</feature>
<feature type="binding site" evidence="1">
    <location>
        <position position="472"/>
    </location>
    <ligand>
        <name>a divalent metal cation</name>
        <dbReference type="ChEBI" id="CHEBI:60240"/>
        <label>1</label>
    </ligand>
</feature>
<feature type="binding site" evidence="1">
    <location>
        <position position="476"/>
    </location>
    <ligand>
        <name>a divalent metal cation</name>
        <dbReference type="ChEBI" id="CHEBI:60240"/>
        <label>2</label>
    </ligand>
</feature>
<feature type="binding site" evidence="1">
    <location>
        <position position="559"/>
    </location>
    <ligand>
        <name>a divalent metal cation</name>
        <dbReference type="ChEBI" id="CHEBI:60240"/>
        <label>1</label>
    </ligand>
</feature>
<feature type="binding site" evidence="1">
    <location>
        <position position="604"/>
    </location>
    <ligand>
        <name>a divalent metal cation</name>
        <dbReference type="ChEBI" id="CHEBI:60240"/>
        <label>2</label>
    </ligand>
</feature>
<feature type="site" description="Interaction with GajB" evidence="2">
    <location>
        <position position="131"/>
    </location>
</feature>
<feature type="site" description="Interaction with GajB" evidence="2">
    <location>
        <position position="134"/>
    </location>
</feature>
<protein>
    <recommendedName>
        <fullName evidence="2">Endonuclease GajA</fullName>
        <ecNumber evidence="2">3.1.-.-</ecNumber>
    </recommendedName>
    <alternativeName>
        <fullName evidence="4">Gabija protein GajA</fullName>
    </alternativeName>
    <alternativeName>
        <fullName evidence="2">Nicking endonuclease GajA</fullName>
    </alternativeName>
</protein>
<comment type="function">
    <text evidence="2 3">Component of antiviral defense system Gabija type II, composed of GajA and GajB. Probably a nicking endonuclease that is strongly inhibited by physiological levels of nucleotides (NTP and dNTP). Expression of Gabija type II in B.subtilis (strain BEST7003) confers resistance to phages phi105, and SpBeta (PubMed:29371424). During viral replication, when nucleotides are rapidly consumed, it is de-suppressed and degrades target DNA (By similarity).</text>
</comment>
<comment type="cofactor">
    <cofactor evidence="2">
        <name>Mg(2+)</name>
        <dbReference type="ChEBI" id="CHEBI:18420"/>
    </cofactor>
</comment>
<comment type="subunit">
    <text evidence="2">Homotetramer (By similarity). Forms the core of the anti-phage defense complex (By similarity). Interacts with GajB; 2 GajB dimers dock at opposite sides of the GajA complex to form a 4:4 GajA-GajB assembly (GajAB) (By similarity). GajAB interacts with Bacillus phage Phi3T Gad1 protein; this interaction forms a 4:4:8 GajAB-Gad1 complex and leads to GajAB inhibition (By similarity).</text>
</comment>
<gene>
    <name evidence="4" type="primary">gajA</name>
    <name type="ORF">IGO_01070</name>
</gene>
<evidence type="ECO:0000250" key="1">
    <source>
        <dbReference type="UniProtKB" id="E8PLM2"/>
    </source>
</evidence>
<evidence type="ECO:0000250" key="2">
    <source>
        <dbReference type="UniProtKB" id="J8H9C1"/>
    </source>
</evidence>
<evidence type="ECO:0000269" key="3">
    <source>
    </source>
</evidence>
<evidence type="ECO:0000303" key="4">
    <source>
    </source>
</evidence>
<reference key="1">
    <citation type="submission" date="2012-04" db="EMBL/GenBank/DDBJ databases">
        <title>The Genome Sequence of Bacillus cereus HuB5-5.</title>
        <authorList>
            <consortium name="The Broad Institute Genome Sequencing Platform"/>
            <consortium name="The Broad Institute Genome Sequencing Center for Infectious Disease"/>
            <person name="Feldgarden M."/>
            <person name="Van der Auwera G.A."/>
            <person name="Mahillon J."/>
            <person name="Duprez V."/>
            <person name="Timmery S."/>
            <person name="Mattelet C."/>
            <person name="Dierick K."/>
            <person name="Sun M."/>
            <person name="Yu Z."/>
            <person name="Zhu L."/>
            <person name="Hu X."/>
            <person name="Shank E.B."/>
            <person name="Swiecicka I."/>
            <person name="Hansen B.M."/>
            <person name="Andrup L."/>
            <person name="Young S.K."/>
            <person name="Zeng Q."/>
            <person name="Gargeya S."/>
            <person name="Fitzgerald M."/>
            <person name="Haas B."/>
            <person name="Abouelleil A."/>
            <person name="Alvarado L."/>
            <person name="Arachchi H.M."/>
            <person name="Berlin A."/>
            <person name="Chapman S.B."/>
            <person name="Goldberg J."/>
            <person name="Griggs A."/>
            <person name="Gujja S."/>
            <person name="Hansen M."/>
            <person name="Howarth C."/>
            <person name="Imamovic A."/>
            <person name="Larimer J."/>
            <person name="McCowen C."/>
            <person name="Montmayeur A."/>
            <person name="Murphy C."/>
            <person name="Neiman D."/>
            <person name="Pearson M."/>
            <person name="Priest M."/>
            <person name="Roberts A."/>
            <person name="Saif S."/>
            <person name="Shea T."/>
            <person name="Sisk P."/>
            <person name="Sykes S."/>
            <person name="Wortman J."/>
            <person name="Nusbaum C."/>
            <person name="Birren B."/>
        </authorList>
    </citation>
    <scope>NUCLEOTIDE SEQUENCE [LARGE SCALE GENOMIC DNA]</scope>
    <source>
        <strain>HuB5-5</strain>
    </source>
</reference>
<reference key="2">
    <citation type="journal article" date="2018" name="Science">
        <title>Systematic discovery of antiphage defense systems in the microbial pangenome.</title>
        <authorList>
            <person name="Doron S."/>
            <person name="Melamed S."/>
            <person name="Ofir G."/>
            <person name="Leavitt A."/>
            <person name="Lopatina A."/>
            <person name="Keren M."/>
            <person name="Amitai G."/>
            <person name="Sorek R."/>
        </authorList>
    </citation>
    <scope>FUNCTION</scope>
    <scope>EXPRESSION IN B.SUBTILIS</scope>
    <source>
        <strain>HuB5-5</strain>
    </source>
</reference>
<keyword id="KW-0051">Antiviral defense</keyword>
<keyword id="KW-0255">Endonuclease</keyword>
<keyword id="KW-0945">Host-virus interaction</keyword>
<keyword id="KW-0378">Hydrolase</keyword>
<keyword id="KW-0460">Magnesium</keyword>
<keyword id="KW-0479">Metal-binding</keyword>
<keyword id="KW-0540">Nuclease</keyword>
<organism>
    <name type="scientific">Bacillus cereus (strain HuB5-5)</name>
    <dbReference type="NCBI Taxonomy" id="1053212"/>
    <lineage>
        <taxon>Bacteria</taxon>
        <taxon>Bacillati</taxon>
        <taxon>Bacillota</taxon>
        <taxon>Bacilli</taxon>
        <taxon>Bacillales</taxon>
        <taxon>Bacillaceae</taxon>
        <taxon>Bacillus</taxon>
        <taxon>Bacillus cereus group</taxon>
    </lineage>
</organism>
<accession>P0DW47</accession>